<sequence length="483" mass="54515">METIHNISNRLQEVLATNKSVNVDTDNDSLSSNQEDNEVEKVRHLVVILGEKYSYAVDRNTGINALMQWFTTNSEIPEEILNAIRSKLNFTYRTNFEPIERAPDGPSPINPLIMLRINPIDAIENVFNNRECFFTDVGWGCMIRTGQSLLGNALQRVKSTVKDQPYIYEMDDTKEITDLFKDNTKSAFSLQNFVKCGRIYNKIAPGEWFGPATTATCIRYLIQENPCYGIEACYISVSSGDIFKENIQGMIDRYPNGNILILLGIKLGLDSVHERYWGEIKTMLESPFSVGIAGGRPSSSLYFFGYFDDTLLFFDPHNSQTALIDDFDESCHTENFGKLNFSDLDPSMLLGFLLPCSKWDEFQEFTSLLTIVNVLDGMDQYRDPDLNSNDIGNVELSPQLKLSQTPDAITDDDYVDIGALIQGNSMNINDRDNGYQEVQCKNQQIVIMDSLNETKPLEIEKVLVGQGTNLVNATTPCREAFPK</sequence>
<name>ATG4_CANGA</name>
<dbReference type="EC" id="3.4.22.-"/>
<dbReference type="EMBL" id="CR380956">
    <property type="protein sequence ID" value="CAG60975.1"/>
    <property type="molecule type" value="Genomic_DNA"/>
</dbReference>
<dbReference type="RefSeq" id="XP_448024.1">
    <property type="nucleotide sequence ID" value="XM_448024.1"/>
</dbReference>
<dbReference type="SMR" id="Q6FP20"/>
<dbReference type="FunCoup" id="Q6FP20">
    <property type="interactions" value="331"/>
</dbReference>
<dbReference type="STRING" id="284593.Q6FP20"/>
<dbReference type="MEROPS" id="C54.001"/>
<dbReference type="EnsemblFungi" id="CAGL0J07304g-T">
    <property type="protein sequence ID" value="CAGL0J07304g-T-p1"/>
    <property type="gene ID" value="CAGL0J07304g"/>
</dbReference>
<dbReference type="KEGG" id="cgr:2889587"/>
<dbReference type="CGD" id="CAL0132844">
    <property type="gene designation" value="CAGL0J07304g"/>
</dbReference>
<dbReference type="VEuPathDB" id="FungiDB:CAGL0J07304g"/>
<dbReference type="eggNOG" id="KOG2674">
    <property type="taxonomic scope" value="Eukaryota"/>
</dbReference>
<dbReference type="HOGENOM" id="CLU_021259_5_3_1"/>
<dbReference type="InParanoid" id="Q6FP20"/>
<dbReference type="OMA" id="CKINESE"/>
<dbReference type="Proteomes" id="UP000002428">
    <property type="component" value="Chromosome J"/>
</dbReference>
<dbReference type="GO" id="GO:0005829">
    <property type="term" value="C:cytosol"/>
    <property type="evidence" value="ECO:0007669"/>
    <property type="project" value="EnsemblFungi"/>
</dbReference>
<dbReference type="GO" id="GO:0005739">
    <property type="term" value="C:mitochondrion"/>
    <property type="evidence" value="ECO:0007669"/>
    <property type="project" value="EnsemblFungi"/>
</dbReference>
<dbReference type="GO" id="GO:0005634">
    <property type="term" value="C:nucleus"/>
    <property type="evidence" value="ECO:0007669"/>
    <property type="project" value="UniProtKB-SubCell"/>
</dbReference>
<dbReference type="GO" id="GO:0000407">
    <property type="term" value="C:phagophore assembly site"/>
    <property type="evidence" value="ECO:0007669"/>
    <property type="project" value="UniProtKB-SubCell"/>
</dbReference>
<dbReference type="GO" id="GO:0004197">
    <property type="term" value="F:cysteine-type endopeptidase activity"/>
    <property type="evidence" value="ECO:0007669"/>
    <property type="project" value="TreeGrafter"/>
</dbReference>
<dbReference type="GO" id="GO:0019786">
    <property type="term" value="F:protein-phosphatidylethanolamide deconjugating activity"/>
    <property type="evidence" value="ECO:0007669"/>
    <property type="project" value="EnsemblFungi"/>
</dbReference>
<dbReference type="GO" id="GO:0035973">
    <property type="term" value="P:aggrephagy"/>
    <property type="evidence" value="ECO:0007669"/>
    <property type="project" value="TreeGrafter"/>
</dbReference>
<dbReference type="GO" id="GO:0000045">
    <property type="term" value="P:autophagosome assembly"/>
    <property type="evidence" value="ECO:0007669"/>
    <property type="project" value="EnsemblFungi"/>
</dbReference>
<dbReference type="GO" id="GO:0032258">
    <property type="term" value="P:cytoplasm to vacuole targeting by the Cvt pathway"/>
    <property type="evidence" value="ECO:0007669"/>
    <property type="project" value="EnsemblFungi"/>
</dbReference>
<dbReference type="GO" id="GO:0000423">
    <property type="term" value="P:mitophagy"/>
    <property type="evidence" value="ECO:0007669"/>
    <property type="project" value="TreeGrafter"/>
</dbReference>
<dbReference type="GO" id="GO:0034727">
    <property type="term" value="P:piecemeal microautophagy of the nucleus"/>
    <property type="evidence" value="ECO:0007669"/>
    <property type="project" value="EnsemblFungi"/>
</dbReference>
<dbReference type="GO" id="GO:0016485">
    <property type="term" value="P:protein processing"/>
    <property type="evidence" value="ECO:0007669"/>
    <property type="project" value="TreeGrafter"/>
</dbReference>
<dbReference type="GO" id="GO:0006612">
    <property type="term" value="P:protein targeting to membrane"/>
    <property type="evidence" value="ECO:0007669"/>
    <property type="project" value="EnsemblFungi"/>
</dbReference>
<dbReference type="InterPro" id="IPR038765">
    <property type="entry name" value="Papain-like_cys_pep_sf"/>
</dbReference>
<dbReference type="InterPro" id="IPR005078">
    <property type="entry name" value="Peptidase_C54"/>
</dbReference>
<dbReference type="InterPro" id="IPR046792">
    <property type="entry name" value="Peptidase_C54_cat"/>
</dbReference>
<dbReference type="PANTHER" id="PTHR22624:SF49">
    <property type="entry name" value="CYSTEINE PROTEASE"/>
    <property type="match status" value="1"/>
</dbReference>
<dbReference type="PANTHER" id="PTHR22624">
    <property type="entry name" value="CYSTEINE PROTEASE ATG4"/>
    <property type="match status" value="1"/>
</dbReference>
<dbReference type="Pfam" id="PF03416">
    <property type="entry name" value="Peptidase_C54"/>
    <property type="match status" value="1"/>
</dbReference>
<dbReference type="SUPFAM" id="SSF54001">
    <property type="entry name" value="Cysteine proteinases"/>
    <property type="match status" value="1"/>
</dbReference>
<keyword id="KW-0072">Autophagy</keyword>
<keyword id="KW-0963">Cytoplasm</keyword>
<keyword id="KW-0378">Hydrolase</keyword>
<keyword id="KW-0539">Nucleus</keyword>
<keyword id="KW-0645">Protease</keyword>
<keyword id="KW-0653">Protein transport</keyword>
<keyword id="KW-1185">Reference proteome</keyword>
<keyword id="KW-0788">Thiol protease</keyword>
<keyword id="KW-0813">Transport</keyword>
<feature type="chain" id="PRO_0000215859" description="Probable cysteine protease ATG4">
    <location>
        <begin position="1"/>
        <end position="483"/>
    </location>
</feature>
<feature type="active site" description="Nucleophile" evidence="2">
    <location>
        <position position="141"/>
    </location>
</feature>
<feature type="active site" evidence="2">
    <location>
        <position position="315"/>
    </location>
</feature>
<feature type="active site" evidence="2">
    <location>
        <position position="317"/>
    </location>
</feature>
<gene>
    <name type="primary">ATG4</name>
    <name type="ordered locus">CAGL0J07304g</name>
</gene>
<comment type="function">
    <text evidence="1">Cysteine protease that plays a key role in cytoplasm to vacuole transport (Cvt) and autophagy by mediating both proteolytic activation and delipidation of ATG8. Required for selective autophagic degradation of the nucleus (nucleophagy) as well as for mitophagy which contributes to regulate mitochondrial quantity and quality by eliminating the mitochondria to a basal level to fulfill cellular energy requirements and preventing excess ROS production. The protease activity is required for proteolytic activation of ATG8: cleaves the C-terminal amino acid of ATG8 to reveal a C-terminal glycine. ATG8 ubiquitin-like activity requires the exposure of the glycine at the C-terminus for its conjugation to phosphatidylethanolamine (PE) and its insertion to membranes, which is necessary for autophagy. The ATG8-PE conjugate mediates tethering between adjacent membranes and stimulates membrane hemifusion, leading to expansion of the autophagosomal membrane during autophagy. In addition to the protease activity, also catalyzes deconjugation of PE-conjugated forms of ATG8 during macroautophagy: ATG8 delipidation is required to release the protein from membranes, which facilitates multiple events during macroautophagy, and especially for efficient autophagosome biogenesis, the assembly of ATG9-containing tubulovesicular clusters into phagophores/autophagosomes, and for the disassembly of PAS-associated ATG components. ATG8 delipidation by ATG4 also recycles ATG8-PE generated on inappropriate membranes to maintain a reservoir of unlipidated ATG8 that is required for autophagosome formation at the PAS.</text>
</comment>
<comment type="catalytic activity">
    <reaction evidence="1">
        <text>[protein]-C-terminal L-amino acid-glycyl-phosphatidylethanolamide + H2O = [protein]-C-terminal L-amino acid-glycine + a 1,2-diacyl-sn-glycero-3-phosphoethanolamine</text>
        <dbReference type="Rhea" id="RHEA:67548"/>
        <dbReference type="Rhea" id="RHEA-COMP:17323"/>
        <dbReference type="Rhea" id="RHEA-COMP:17324"/>
        <dbReference type="ChEBI" id="CHEBI:15377"/>
        <dbReference type="ChEBI" id="CHEBI:64612"/>
        <dbReference type="ChEBI" id="CHEBI:172940"/>
        <dbReference type="ChEBI" id="CHEBI:172941"/>
    </reaction>
    <physiologicalReaction direction="left-to-right" evidence="1">
        <dbReference type="Rhea" id="RHEA:67549"/>
    </physiologicalReaction>
</comment>
<comment type="subcellular location">
    <subcellularLocation>
        <location evidence="1">Cytoplasm</location>
    </subcellularLocation>
    <subcellularLocation>
        <location evidence="1">Nucleus</location>
    </subcellularLocation>
    <subcellularLocation>
        <location evidence="1">Preautophagosomal structure</location>
    </subcellularLocation>
</comment>
<comment type="similarity">
    <text evidence="3">Belongs to the peptidase C54 family.</text>
</comment>
<proteinExistence type="inferred from homology"/>
<evidence type="ECO:0000250" key="1">
    <source>
        <dbReference type="UniProtKB" id="P53867"/>
    </source>
</evidence>
<evidence type="ECO:0000250" key="2">
    <source>
        <dbReference type="UniProtKB" id="Q9Y4P1"/>
    </source>
</evidence>
<evidence type="ECO:0000305" key="3"/>
<protein>
    <recommendedName>
        <fullName>Probable cysteine protease ATG4</fullName>
        <ecNumber>3.4.22.-</ecNumber>
    </recommendedName>
    <alternativeName>
        <fullName>Autophagy-related protein 4</fullName>
    </alternativeName>
</protein>
<organism>
    <name type="scientific">Candida glabrata (strain ATCC 2001 / BCRC 20586 / JCM 3761 / NBRC 0622 / NRRL Y-65 / CBS 138)</name>
    <name type="common">Yeast</name>
    <name type="synonym">Nakaseomyces glabratus</name>
    <dbReference type="NCBI Taxonomy" id="284593"/>
    <lineage>
        <taxon>Eukaryota</taxon>
        <taxon>Fungi</taxon>
        <taxon>Dikarya</taxon>
        <taxon>Ascomycota</taxon>
        <taxon>Saccharomycotina</taxon>
        <taxon>Saccharomycetes</taxon>
        <taxon>Saccharomycetales</taxon>
        <taxon>Saccharomycetaceae</taxon>
        <taxon>Nakaseomyces</taxon>
    </lineage>
</organism>
<reference key="1">
    <citation type="journal article" date="2004" name="Nature">
        <title>Genome evolution in yeasts.</title>
        <authorList>
            <person name="Dujon B."/>
            <person name="Sherman D."/>
            <person name="Fischer G."/>
            <person name="Durrens P."/>
            <person name="Casaregola S."/>
            <person name="Lafontaine I."/>
            <person name="de Montigny J."/>
            <person name="Marck C."/>
            <person name="Neuveglise C."/>
            <person name="Talla E."/>
            <person name="Goffard N."/>
            <person name="Frangeul L."/>
            <person name="Aigle M."/>
            <person name="Anthouard V."/>
            <person name="Babour A."/>
            <person name="Barbe V."/>
            <person name="Barnay S."/>
            <person name="Blanchin S."/>
            <person name="Beckerich J.-M."/>
            <person name="Beyne E."/>
            <person name="Bleykasten C."/>
            <person name="Boisrame A."/>
            <person name="Boyer J."/>
            <person name="Cattolico L."/>
            <person name="Confanioleri F."/>
            <person name="de Daruvar A."/>
            <person name="Despons L."/>
            <person name="Fabre E."/>
            <person name="Fairhead C."/>
            <person name="Ferry-Dumazet H."/>
            <person name="Groppi A."/>
            <person name="Hantraye F."/>
            <person name="Hennequin C."/>
            <person name="Jauniaux N."/>
            <person name="Joyet P."/>
            <person name="Kachouri R."/>
            <person name="Kerrest A."/>
            <person name="Koszul R."/>
            <person name="Lemaire M."/>
            <person name="Lesur I."/>
            <person name="Ma L."/>
            <person name="Muller H."/>
            <person name="Nicaud J.-M."/>
            <person name="Nikolski M."/>
            <person name="Oztas S."/>
            <person name="Ozier-Kalogeropoulos O."/>
            <person name="Pellenz S."/>
            <person name="Potier S."/>
            <person name="Richard G.-F."/>
            <person name="Straub M.-L."/>
            <person name="Suleau A."/>
            <person name="Swennen D."/>
            <person name="Tekaia F."/>
            <person name="Wesolowski-Louvel M."/>
            <person name="Westhof E."/>
            <person name="Wirth B."/>
            <person name="Zeniou-Meyer M."/>
            <person name="Zivanovic Y."/>
            <person name="Bolotin-Fukuhara M."/>
            <person name="Thierry A."/>
            <person name="Bouchier C."/>
            <person name="Caudron B."/>
            <person name="Scarpelli C."/>
            <person name="Gaillardin C."/>
            <person name="Weissenbach J."/>
            <person name="Wincker P."/>
            <person name="Souciet J.-L."/>
        </authorList>
    </citation>
    <scope>NUCLEOTIDE SEQUENCE [LARGE SCALE GENOMIC DNA]</scope>
    <source>
        <strain>ATCC 2001 / BCRC 20586 / JCM 3761 / NBRC 0622 / NRRL Y-65 / CBS 138</strain>
    </source>
</reference>
<accession>Q6FP20</accession>